<evidence type="ECO:0000255" key="1">
    <source>
        <dbReference type="HAMAP-Rule" id="MF_01367"/>
    </source>
</evidence>
<evidence type="ECO:0000305" key="2"/>
<keyword id="KW-0150">Chloroplast</keyword>
<keyword id="KW-0934">Plastid</keyword>
<keyword id="KW-1185">Reference proteome</keyword>
<keyword id="KW-0687">Ribonucleoprotein</keyword>
<keyword id="KW-0689">Ribosomal protein</keyword>
<keyword id="KW-0694">RNA-binding</keyword>
<keyword id="KW-0699">rRNA-binding</keyword>
<geneLocation type="chloroplast"/>
<name>RK14_VITVI</name>
<reference key="1">
    <citation type="journal article" date="2006" name="BMC Evol. Biol.">
        <title>Phylogenetic analyses of Vitis (Vitaceae) based on complete chloroplast genome sequences: effects of taxon sampling and phylogenetic methods on resolving relationships among rosids.</title>
        <authorList>
            <person name="Jansen R.K."/>
            <person name="Kaittanis C."/>
            <person name="Lee S.-B."/>
            <person name="Saski C."/>
            <person name="Tomkins J."/>
            <person name="Alverson A.J."/>
            <person name="Daniell H."/>
        </authorList>
    </citation>
    <scope>NUCLEOTIDE SEQUENCE [LARGE SCALE GENOMIC DNA]</scope>
    <source>
        <strain>cv. Maxxa</strain>
    </source>
</reference>
<gene>
    <name evidence="1" type="primary">rpl14</name>
</gene>
<dbReference type="EMBL" id="DQ424856">
    <property type="protein sequence ID" value="ABE47570.1"/>
    <property type="molecule type" value="Genomic_DNA"/>
</dbReference>
<dbReference type="RefSeq" id="YP_567114.1">
    <property type="nucleotide sequence ID" value="NC_007957.1"/>
</dbReference>
<dbReference type="SMR" id="Q0ZIY2"/>
<dbReference type="FunCoup" id="Q0ZIY2">
    <property type="interactions" value="419"/>
</dbReference>
<dbReference type="STRING" id="29760.Q0ZIY2"/>
<dbReference type="PaxDb" id="29760-VIT_19s0014g02520.t01"/>
<dbReference type="GeneID" id="4025019"/>
<dbReference type="KEGG" id="vvi:4025019"/>
<dbReference type="eggNOG" id="KOG0901">
    <property type="taxonomic scope" value="Eukaryota"/>
</dbReference>
<dbReference type="InParanoid" id="Q0ZIY2"/>
<dbReference type="OrthoDB" id="57608at71240"/>
<dbReference type="Proteomes" id="UP000009183">
    <property type="component" value="Chloroplast"/>
</dbReference>
<dbReference type="ExpressionAtlas" id="Q0ZIY2">
    <property type="expression patterns" value="baseline"/>
</dbReference>
<dbReference type="GO" id="GO:0009507">
    <property type="term" value="C:chloroplast"/>
    <property type="evidence" value="ECO:0007669"/>
    <property type="project" value="UniProtKB-SubCell"/>
</dbReference>
<dbReference type="GO" id="GO:0022625">
    <property type="term" value="C:cytosolic large ribosomal subunit"/>
    <property type="evidence" value="ECO:0000318"/>
    <property type="project" value="GO_Central"/>
</dbReference>
<dbReference type="GO" id="GO:0070180">
    <property type="term" value="F:large ribosomal subunit rRNA binding"/>
    <property type="evidence" value="ECO:0000318"/>
    <property type="project" value="GO_Central"/>
</dbReference>
<dbReference type="GO" id="GO:0003735">
    <property type="term" value="F:structural constituent of ribosome"/>
    <property type="evidence" value="ECO:0000318"/>
    <property type="project" value="GO_Central"/>
</dbReference>
<dbReference type="GO" id="GO:0006412">
    <property type="term" value="P:translation"/>
    <property type="evidence" value="ECO:0007669"/>
    <property type="project" value="UniProtKB-UniRule"/>
</dbReference>
<dbReference type="CDD" id="cd00337">
    <property type="entry name" value="Ribosomal_uL14"/>
    <property type="match status" value="1"/>
</dbReference>
<dbReference type="FunFam" id="2.40.150.20:FF:000002">
    <property type="entry name" value="50S ribosomal protein L14, chloroplastic"/>
    <property type="match status" value="1"/>
</dbReference>
<dbReference type="Gene3D" id="2.40.150.20">
    <property type="entry name" value="Ribosomal protein L14"/>
    <property type="match status" value="1"/>
</dbReference>
<dbReference type="HAMAP" id="MF_01367">
    <property type="entry name" value="Ribosomal_uL14"/>
    <property type="match status" value="1"/>
</dbReference>
<dbReference type="InterPro" id="IPR000218">
    <property type="entry name" value="Ribosomal_uL14"/>
</dbReference>
<dbReference type="InterPro" id="IPR005745">
    <property type="entry name" value="Ribosomal_uL14_bac-type"/>
</dbReference>
<dbReference type="InterPro" id="IPR019972">
    <property type="entry name" value="Ribosomal_uL14_CS"/>
</dbReference>
<dbReference type="InterPro" id="IPR036853">
    <property type="entry name" value="Ribosomal_uL14_sf"/>
</dbReference>
<dbReference type="NCBIfam" id="TIGR01067">
    <property type="entry name" value="rplN_bact"/>
    <property type="match status" value="1"/>
</dbReference>
<dbReference type="PANTHER" id="PTHR11761">
    <property type="entry name" value="50S/60S RIBOSOMAL PROTEIN L14/L23"/>
    <property type="match status" value="1"/>
</dbReference>
<dbReference type="PANTHER" id="PTHR11761:SF3">
    <property type="entry name" value="LARGE RIBOSOMAL SUBUNIT PROTEIN UL14M"/>
    <property type="match status" value="1"/>
</dbReference>
<dbReference type="Pfam" id="PF00238">
    <property type="entry name" value="Ribosomal_L14"/>
    <property type="match status" value="1"/>
</dbReference>
<dbReference type="SMART" id="SM01374">
    <property type="entry name" value="Ribosomal_L14"/>
    <property type="match status" value="1"/>
</dbReference>
<dbReference type="SUPFAM" id="SSF50193">
    <property type="entry name" value="Ribosomal protein L14"/>
    <property type="match status" value="1"/>
</dbReference>
<dbReference type="PROSITE" id="PS00049">
    <property type="entry name" value="RIBOSOMAL_L14"/>
    <property type="match status" value="1"/>
</dbReference>
<comment type="function">
    <text evidence="1">Binds to 23S rRNA.</text>
</comment>
<comment type="subunit">
    <text evidence="1">Part of the 50S ribosomal subunit.</text>
</comment>
<comment type="subcellular location">
    <subcellularLocation>
        <location>Plastid</location>
        <location>Chloroplast</location>
    </subcellularLocation>
</comment>
<comment type="similarity">
    <text evidence="1">Belongs to the universal ribosomal protein uL14 family.</text>
</comment>
<sequence length="122" mass="13691">MIQPQTHLNVADNSGARELMCIRIIGTSNRRYAHIGDVIVAVIKEVVPNMPLERSEVIRAVIVRTCKELKRDNGMIIRYDDNAAVIIDQEGNPKGTRIFGAIVRELRQLNFTKIVSLAPEVL</sequence>
<proteinExistence type="inferred from homology"/>
<accession>Q0ZIY2</accession>
<feature type="chain" id="PRO_0000276370" description="Large ribosomal subunit protein uL14c">
    <location>
        <begin position="1"/>
        <end position="122"/>
    </location>
</feature>
<organism>
    <name type="scientific">Vitis vinifera</name>
    <name type="common">Grape</name>
    <dbReference type="NCBI Taxonomy" id="29760"/>
    <lineage>
        <taxon>Eukaryota</taxon>
        <taxon>Viridiplantae</taxon>
        <taxon>Streptophyta</taxon>
        <taxon>Embryophyta</taxon>
        <taxon>Tracheophyta</taxon>
        <taxon>Spermatophyta</taxon>
        <taxon>Magnoliopsida</taxon>
        <taxon>eudicotyledons</taxon>
        <taxon>Gunneridae</taxon>
        <taxon>Pentapetalae</taxon>
        <taxon>rosids</taxon>
        <taxon>Vitales</taxon>
        <taxon>Vitaceae</taxon>
        <taxon>Viteae</taxon>
        <taxon>Vitis</taxon>
    </lineage>
</organism>
<protein>
    <recommendedName>
        <fullName evidence="1">Large ribosomal subunit protein uL14c</fullName>
    </recommendedName>
    <alternativeName>
        <fullName evidence="2">50S ribosomal protein L14, chloroplastic</fullName>
    </alternativeName>
</protein>